<organism>
    <name type="scientific">Escherichia coli (strain SE11)</name>
    <dbReference type="NCBI Taxonomy" id="409438"/>
    <lineage>
        <taxon>Bacteria</taxon>
        <taxon>Pseudomonadati</taxon>
        <taxon>Pseudomonadota</taxon>
        <taxon>Gammaproteobacteria</taxon>
        <taxon>Enterobacterales</taxon>
        <taxon>Enterobacteriaceae</taxon>
        <taxon>Escherichia</taxon>
    </lineage>
</organism>
<feature type="chain" id="PRO_1000127974" description="Small ribosomal subunit protein uS19">
    <location>
        <begin position="1"/>
        <end position="92"/>
    </location>
</feature>
<proteinExistence type="inferred from homology"/>
<gene>
    <name evidence="1" type="primary">rpsS</name>
    <name type="ordered locus">ECSE_3591</name>
</gene>
<comment type="function">
    <text evidence="1">Protein S19 forms a complex with S13 that binds strongly to the 16S ribosomal RNA.</text>
</comment>
<comment type="similarity">
    <text evidence="1">Belongs to the universal ribosomal protein uS19 family.</text>
</comment>
<accession>B6I230</accession>
<name>RS19_ECOSE</name>
<dbReference type="EMBL" id="AP009240">
    <property type="protein sequence ID" value="BAG79115.1"/>
    <property type="molecule type" value="Genomic_DNA"/>
</dbReference>
<dbReference type="RefSeq" id="WP_001138117.1">
    <property type="nucleotide sequence ID" value="NC_011415.1"/>
</dbReference>
<dbReference type="SMR" id="B6I230"/>
<dbReference type="GeneID" id="98390438"/>
<dbReference type="KEGG" id="ecy:ECSE_3591"/>
<dbReference type="HOGENOM" id="CLU_144911_0_1_6"/>
<dbReference type="Proteomes" id="UP000008199">
    <property type="component" value="Chromosome"/>
</dbReference>
<dbReference type="GO" id="GO:0005737">
    <property type="term" value="C:cytoplasm"/>
    <property type="evidence" value="ECO:0007669"/>
    <property type="project" value="UniProtKB-ARBA"/>
</dbReference>
<dbReference type="GO" id="GO:0015935">
    <property type="term" value="C:small ribosomal subunit"/>
    <property type="evidence" value="ECO:0007669"/>
    <property type="project" value="InterPro"/>
</dbReference>
<dbReference type="GO" id="GO:0019843">
    <property type="term" value="F:rRNA binding"/>
    <property type="evidence" value="ECO:0007669"/>
    <property type="project" value="UniProtKB-UniRule"/>
</dbReference>
<dbReference type="GO" id="GO:0003735">
    <property type="term" value="F:structural constituent of ribosome"/>
    <property type="evidence" value="ECO:0007669"/>
    <property type="project" value="InterPro"/>
</dbReference>
<dbReference type="GO" id="GO:0000028">
    <property type="term" value="P:ribosomal small subunit assembly"/>
    <property type="evidence" value="ECO:0007669"/>
    <property type="project" value="TreeGrafter"/>
</dbReference>
<dbReference type="GO" id="GO:0006412">
    <property type="term" value="P:translation"/>
    <property type="evidence" value="ECO:0007669"/>
    <property type="project" value="UniProtKB-UniRule"/>
</dbReference>
<dbReference type="FunFam" id="3.30.860.10:FF:000001">
    <property type="entry name" value="30S ribosomal protein S19"/>
    <property type="match status" value="1"/>
</dbReference>
<dbReference type="Gene3D" id="3.30.860.10">
    <property type="entry name" value="30s Ribosomal Protein S19, Chain A"/>
    <property type="match status" value="1"/>
</dbReference>
<dbReference type="HAMAP" id="MF_00531">
    <property type="entry name" value="Ribosomal_uS19"/>
    <property type="match status" value="1"/>
</dbReference>
<dbReference type="InterPro" id="IPR002222">
    <property type="entry name" value="Ribosomal_uS19"/>
</dbReference>
<dbReference type="InterPro" id="IPR005732">
    <property type="entry name" value="Ribosomal_uS19_bac-type"/>
</dbReference>
<dbReference type="InterPro" id="IPR020934">
    <property type="entry name" value="Ribosomal_uS19_CS"/>
</dbReference>
<dbReference type="InterPro" id="IPR023575">
    <property type="entry name" value="Ribosomal_uS19_SF"/>
</dbReference>
<dbReference type="NCBIfam" id="TIGR01050">
    <property type="entry name" value="rpsS_bact"/>
    <property type="match status" value="1"/>
</dbReference>
<dbReference type="PANTHER" id="PTHR11880">
    <property type="entry name" value="RIBOSOMAL PROTEIN S19P FAMILY MEMBER"/>
    <property type="match status" value="1"/>
</dbReference>
<dbReference type="PANTHER" id="PTHR11880:SF8">
    <property type="entry name" value="SMALL RIBOSOMAL SUBUNIT PROTEIN US19M"/>
    <property type="match status" value="1"/>
</dbReference>
<dbReference type="Pfam" id="PF00203">
    <property type="entry name" value="Ribosomal_S19"/>
    <property type="match status" value="1"/>
</dbReference>
<dbReference type="PIRSF" id="PIRSF002144">
    <property type="entry name" value="Ribosomal_S19"/>
    <property type="match status" value="1"/>
</dbReference>
<dbReference type="PRINTS" id="PR00975">
    <property type="entry name" value="RIBOSOMALS19"/>
</dbReference>
<dbReference type="SUPFAM" id="SSF54570">
    <property type="entry name" value="Ribosomal protein S19"/>
    <property type="match status" value="1"/>
</dbReference>
<dbReference type="PROSITE" id="PS00323">
    <property type="entry name" value="RIBOSOMAL_S19"/>
    <property type="match status" value="1"/>
</dbReference>
<keyword id="KW-0687">Ribonucleoprotein</keyword>
<keyword id="KW-0689">Ribosomal protein</keyword>
<keyword id="KW-0694">RNA-binding</keyword>
<keyword id="KW-0699">rRNA-binding</keyword>
<evidence type="ECO:0000255" key="1">
    <source>
        <dbReference type="HAMAP-Rule" id="MF_00531"/>
    </source>
</evidence>
<evidence type="ECO:0000305" key="2"/>
<reference key="1">
    <citation type="journal article" date="2008" name="DNA Res.">
        <title>Complete genome sequence and comparative analysis of the wild-type commensal Escherichia coli strain SE11 isolated from a healthy adult.</title>
        <authorList>
            <person name="Oshima K."/>
            <person name="Toh H."/>
            <person name="Ogura Y."/>
            <person name="Sasamoto H."/>
            <person name="Morita H."/>
            <person name="Park S.-H."/>
            <person name="Ooka T."/>
            <person name="Iyoda S."/>
            <person name="Taylor T.D."/>
            <person name="Hayashi T."/>
            <person name="Itoh K."/>
            <person name="Hattori M."/>
        </authorList>
    </citation>
    <scope>NUCLEOTIDE SEQUENCE [LARGE SCALE GENOMIC DNA]</scope>
    <source>
        <strain>SE11</strain>
    </source>
</reference>
<sequence length="92" mass="10430">MPRSLKKGPFIDLHLLKKVEKAVESGDKKPLRTWSRRSTIFPNMIGLTIAVHNGRQHVPVFVTDEMVGHKLGEFAPTRTYRGHAADKKAKKK</sequence>
<protein>
    <recommendedName>
        <fullName evidence="1">Small ribosomal subunit protein uS19</fullName>
    </recommendedName>
    <alternativeName>
        <fullName evidence="2">30S ribosomal protein S19</fullName>
    </alternativeName>
</protein>